<protein>
    <recommendedName>
        <fullName>Uncharacterized protein aq_758</fullName>
    </recommendedName>
</protein>
<organism>
    <name type="scientific">Aquifex aeolicus (strain VF5)</name>
    <dbReference type="NCBI Taxonomy" id="224324"/>
    <lineage>
        <taxon>Bacteria</taxon>
        <taxon>Pseudomonadati</taxon>
        <taxon>Aquificota</taxon>
        <taxon>Aquificia</taxon>
        <taxon>Aquificales</taxon>
        <taxon>Aquificaceae</taxon>
        <taxon>Aquifex</taxon>
    </lineage>
</organism>
<feature type="chain" id="PRO_0000186879" description="Uncharacterized protein aq_758">
    <location>
        <begin position="1"/>
        <end position="165"/>
    </location>
</feature>
<feature type="transmembrane region" description="Helical" evidence="1">
    <location>
        <begin position="4"/>
        <end position="26"/>
    </location>
</feature>
<comment type="subcellular location">
    <subcellularLocation>
        <location evidence="2">Membrane</location>
        <topology evidence="2">Single-pass membrane protein</topology>
    </subcellularLocation>
</comment>
<accession>O66960</accession>
<gene>
    <name type="ordered locus">aq_758</name>
</gene>
<sequence length="165" mass="18165">MRYFVIGTMIALAGLLVGGGVGSYFTSSKLLKQFQNIPGSPIVLSATYNKEKHLIAYTISNPGTLPIKITEKAFVFTPGKESKEKGYVLSNIPANVTIPPLSVAIVELKLKEGTEKLKVGDLVVATFTYTHPLSQDIYTVVHPFTYGVKEKQQTEKKEEKKEESK</sequence>
<keyword id="KW-0472">Membrane</keyword>
<keyword id="KW-1185">Reference proteome</keyword>
<keyword id="KW-0812">Transmembrane</keyword>
<keyword id="KW-1133">Transmembrane helix</keyword>
<dbReference type="EMBL" id="AE000657">
    <property type="protein sequence ID" value="AAC06925.1"/>
    <property type="molecule type" value="Genomic_DNA"/>
</dbReference>
<dbReference type="PIR" id="E70366">
    <property type="entry name" value="E70366"/>
</dbReference>
<dbReference type="RefSeq" id="NP_213521.1">
    <property type="nucleotide sequence ID" value="NC_000918.1"/>
</dbReference>
<dbReference type="RefSeq" id="WP_010880459.1">
    <property type="nucleotide sequence ID" value="NC_000918.1"/>
</dbReference>
<dbReference type="STRING" id="224324.aq_758"/>
<dbReference type="EnsemblBacteria" id="AAC06925">
    <property type="protein sequence ID" value="AAC06925"/>
    <property type="gene ID" value="aq_758"/>
</dbReference>
<dbReference type="KEGG" id="aae:aq_758"/>
<dbReference type="eggNOG" id="ENOG5032R1Y">
    <property type="taxonomic scope" value="Bacteria"/>
</dbReference>
<dbReference type="HOGENOM" id="CLU_1607461_0_0_0"/>
<dbReference type="InParanoid" id="O66960"/>
<dbReference type="OrthoDB" id="13304at2"/>
<dbReference type="Proteomes" id="UP000000798">
    <property type="component" value="Chromosome"/>
</dbReference>
<dbReference type="GO" id="GO:0016020">
    <property type="term" value="C:membrane"/>
    <property type="evidence" value="ECO:0007669"/>
    <property type="project" value="UniProtKB-SubCell"/>
</dbReference>
<evidence type="ECO:0000255" key="1"/>
<evidence type="ECO:0000305" key="2"/>
<reference key="1">
    <citation type="journal article" date="1998" name="Nature">
        <title>The complete genome of the hyperthermophilic bacterium Aquifex aeolicus.</title>
        <authorList>
            <person name="Deckert G."/>
            <person name="Warren P.V."/>
            <person name="Gaasterland T."/>
            <person name="Young W.G."/>
            <person name="Lenox A.L."/>
            <person name="Graham D.E."/>
            <person name="Overbeek R."/>
            <person name="Snead M.A."/>
            <person name="Keller M."/>
            <person name="Aujay M."/>
            <person name="Huber R."/>
            <person name="Feldman R.A."/>
            <person name="Short J.M."/>
            <person name="Olsen G.J."/>
            <person name="Swanson R.V."/>
        </authorList>
    </citation>
    <scope>NUCLEOTIDE SEQUENCE [LARGE SCALE GENOMIC DNA]</scope>
    <source>
        <strain>VF5</strain>
    </source>
</reference>
<proteinExistence type="predicted"/>
<name>Y758_AQUAE</name>